<evidence type="ECO:0000250" key="1"/>
<evidence type="ECO:0000256" key="2">
    <source>
        <dbReference type="SAM" id="MobiDB-lite"/>
    </source>
</evidence>
<evidence type="ECO:0000305" key="3"/>
<comment type="function">
    <text evidence="1">Involved in ubiquitin-mediated protein degradation. Regulatory factor in the ubiquitin/proteasome pathway that controls the turnover of proteasome substrates. Targets proteasomes to the nucleus and facilitates the degradation of nuclear proteins (By similarity).</text>
</comment>
<comment type="subunit">
    <text evidence="1">Binds the proteasome. Interacts with karyopherin SRP1 and Proteasome subunit RPN11.</text>
</comment>
<comment type="subcellular location">
    <subcellularLocation>
        <location evidence="1">Cytoplasm</location>
    </subcellularLocation>
    <subcellularLocation>
        <location evidence="1">Nucleus</location>
    </subcellularLocation>
</comment>
<comment type="similarity">
    <text evidence="3">Belongs to the cut8/STS1 family.</text>
</comment>
<gene>
    <name type="primary">STS1</name>
    <name type="synonym">DBF8</name>
    <name type="synonym">SSM5</name>
    <name type="ORF">EC1118_1I12_2168g</name>
</gene>
<sequence>MMGFEWGFKPSSKITQSTVSSQGTGNVMIPTAGVKQKRRYANEEQEEEELPRNKNVMKYGGVSKRRPQPGSLIRGQPLPLQRGMELMNKNQLQQLLVDLMTKHPEIQQSVHTRVIGLDFSIQKCLDMLKQKSEAVYQSIPYNRSYESNKLDDYAFVRMKPQILEFLNCLVDFILDNIPPRLENLHASLKFLDICTELVIKLPRFELASNNYYYDKCIEQLSHVWCTLIEHVARDRIILLADNSSVWKSHMTRLQVYNEHSNGLLERPLQLFKSLDMGSPSAASSSTLSLQESIIYHHDTMTANENNNNSGSAATDSPFN</sequence>
<protein>
    <recommendedName>
        <fullName>Tethering factor for nuclear proteasome STS1</fullName>
    </recommendedName>
    <alternativeName>
        <fullName>Dumbbell former protein 8</fullName>
    </alternativeName>
    <alternativeName>
        <fullName>SEC23 suppressor 1</fullName>
    </alternativeName>
</protein>
<dbReference type="EMBL" id="FN393074">
    <property type="protein sequence ID" value="CAY80523.1"/>
    <property type="molecule type" value="Genomic_DNA"/>
</dbReference>
<dbReference type="SMR" id="C8ZAR0"/>
<dbReference type="HOGENOM" id="CLU_054606_1_0_1"/>
<dbReference type="OrthoDB" id="28232at4893"/>
<dbReference type="Proteomes" id="UP000000286">
    <property type="component" value="Chromosome IX, Scaffold EC1118_1I12"/>
</dbReference>
<dbReference type="GO" id="GO:0005737">
    <property type="term" value="C:cytoplasm"/>
    <property type="evidence" value="ECO:0007669"/>
    <property type="project" value="UniProtKB-SubCell"/>
</dbReference>
<dbReference type="GO" id="GO:0031965">
    <property type="term" value="C:nuclear membrane"/>
    <property type="evidence" value="ECO:0007669"/>
    <property type="project" value="TreeGrafter"/>
</dbReference>
<dbReference type="GO" id="GO:0070628">
    <property type="term" value="F:proteasome binding"/>
    <property type="evidence" value="ECO:0007669"/>
    <property type="project" value="TreeGrafter"/>
</dbReference>
<dbReference type="GO" id="GO:0071630">
    <property type="term" value="P:nuclear protein quality control by the ubiquitin-proteasome system"/>
    <property type="evidence" value="ECO:0007669"/>
    <property type="project" value="InterPro"/>
</dbReference>
<dbReference type="GO" id="GO:0031144">
    <property type="term" value="P:proteasome localization"/>
    <property type="evidence" value="ECO:0007669"/>
    <property type="project" value="InterPro"/>
</dbReference>
<dbReference type="GO" id="GO:0015031">
    <property type="term" value="P:protein transport"/>
    <property type="evidence" value="ECO:0007669"/>
    <property type="project" value="UniProtKB-KW"/>
</dbReference>
<dbReference type="FunFam" id="1.20.58.1590:FF:000003">
    <property type="entry name" value="Tethering factor for nuclear proteasome STS1"/>
    <property type="match status" value="1"/>
</dbReference>
<dbReference type="Gene3D" id="1.20.58.1590">
    <property type="entry name" value="Tethering factor for nuclear proteasome Cut8/Sts1"/>
    <property type="match status" value="1"/>
</dbReference>
<dbReference type="InterPro" id="IPR013868">
    <property type="entry name" value="Cut8/Sts1_fam"/>
</dbReference>
<dbReference type="InterPro" id="IPR038422">
    <property type="entry name" value="Cut8/Sts1_sf"/>
</dbReference>
<dbReference type="PANTHER" id="PTHR28032">
    <property type="entry name" value="FI02826P"/>
    <property type="match status" value="1"/>
</dbReference>
<dbReference type="PANTHER" id="PTHR28032:SF1">
    <property type="entry name" value="FI02826P"/>
    <property type="match status" value="1"/>
</dbReference>
<dbReference type="Pfam" id="PF08559">
    <property type="entry name" value="Cut8"/>
    <property type="match status" value="1"/>
</dbReference>
<keyword id="KW-0963">Cytoplasm</keyword>
<keyword id="KW-0539">Nucleus</keyword>
<keyword id="KW-0653">Protein transport</keyword>
<keyword id="KW-0813">Transport</keyword>
<accession>C8ZAR0</accession>
<name>STS1_YEAS8</name>
<reference key="1">
    <citation type="journal article" date="2009" name="Proc. Natl. Acad. Sci. U.S.A.">
        <title>Eukaryote-to-eukaryote gene transfer events revealed by the genome sequence of the wine yeast Saccharomyces cerevisiae EC1118.</title>
        <authorList>
            <person name="Novo M."/>
            <person name="Bigey F."/>
            <person name="Beyne E."/>
            <person name="Galeote V."/>
            <person name="Gavory F."/>
            <person name="Mallet S."/>
            <person name="Cambon B."/>
            <person name="Legras J.-L."/>
            <person name="Wincker P."/>
            <person name="Casaregola S."/>
            <person name="Dequin S."/>
        </authorList>
    </citation>
    <scope>NUCLEOTIDE SEQUENCE [LARGE SCALE GENOMIC DNA]</scope>
    <source>
        <strain>Lalvin EC1118 / Prise de mousse</strain>
    </source>
</reference>
<proteinExistence type="inferred from homology"/>
<feature type="chain" id="PRO_0000409439" description="Tethering factor for nuclear proteasome STS1">
    <location>
        <begin position="1"/>
        <end position="319"/>
    </location>
</feature>
<feature type="region of interest" description="Disordered" evidence="2">
    <location>
        <begin position="33"/>
        <end position="76"/>
    </location>
</feature>
<organism>
    <name type="scientific">Saccharomyces cerevisiae (strain Lalvin EC1118 / Prise de mousse)</name>
    <name type="common">Baker's yeast</name>
    <dbReference type="NCBI Taxonomy" id="643680"/>
    <lineage>
        <taxon>Eukaryota</taxon>
        <taxon>Fungi</taxon>
        <taxon>Dikarya</taxon>
        <taxon>Ascomycota</taxon>
        <taxon>Saccharomycotina</taxon>
        <taxon>Saccharomycetes</taxon>
        <taxon>Saccharomycetales</taxon>
        <taxon>Saccharomycetaceae</taxon>
        <taxon>Saccharomyces</taxon>
    </lineage>
</organism>